<protein>
    <recommendedName>
        <fullName evidence="1">tRNA uridine 5-carboxymethylaminomethyl modification enzyme MnmG</fullName>
    </recommendedName>
    <alternativeName>
        <fullName evidence="1">Glucose-inhibited division protein A</fullName>
    </alternativeName>
</protein>
<organism>
    <name type="scientific">Anaplasma marginale (strain Florida)</name>
    <dbReference type="NCBI Taxonomy" id="320483"/>
    <lineage>
        <taxon>Bacteria</taxon>
        <taxon>Pseudomonadati</taxon>
        <taxon>Pseudomonadota</taxon>
        <taxon>Alphaproteobacteria</taxon>
        <taxon>Rickettsiales</taxon>
        <taxon>Anaplasmataceae</taxon>
        <taxon>Anaplasma</taxon>
    </lineage>
</organism>
<gene>
    <name evidence="1" type="primary">mnmG</name>
    <name evidence="1" type="synonym">gidA</name>
    <name type="ordered locus">AMF_737</name>
</gene>
<evidence type="ECO:0000255" key="1">
    <source>
        <dbReference type="HAMAP-Rule" id="MF_00129"/>
    </source>
</evidence>
<reference key="1">
    <citation type="journal article" date="2009" name="BMC Genomics">
        <title>Conservation in the face of diversity: multistrain analysis of an intracellular bacterium.</title>
        <authorList>
            <person name="Dark M.J."/>
            <person name="Herndon D.R."/>
            <person name="Kappmeyer L.S."/>
            <person name="Gonzales M.P."/>
            <person name="Nordeen E."/>
            <person name="Palmer G.H."/>
            <person name="Knowles D.P. Jr."/>
            <person name="Brayton K.A."/>
        </authorList>
    </citation>
    <scope>NUCLEOTIDE SEQUENCE [LARGE SCALE GENOMIC DNA]</scope>
    <source>
        <strain>Florida</strain>
    </source>
</reference>
<feature type="chain" id="PRO_1000122741" description="tRNA uridine 5-carboxymethylaminomethyl modification enzyme MnmG">
    <location>
        <begin position="1"/>
        <end position="637"/>
    </location>
</feature>
<feature type="binding site" evidence="1">
    <location>
        <begin position="19"/>
        <end position="24"/>
    </location>
    <ligand>
        <name>FAD</name>
        <dbReference type="ChEBI" id="CHEBI:57692"/>
    </ligand>
</feature>
<feature type="binding site" evidence="1">
    <location>
        <position position="131"/>
    </location>
    <ligand>
        <name>FAD</name>
        <dbReference type="ChEBI" id="CHEBI:57692"/>
    </ligand>
</feature>
<feature type="binding site" evidence="1">
    <location>
        <position position="191"/>
    </location>
    <ligand>
        <name>FAD</name>
        <dbReference type="ChEBI" id="CHEBI:57692"/>
    </ligand>
</feature>
<feature type="binding site" evidence="1">
    <location>
        <begin position="283"/>
        <end position="297"/>
    </location>
    <ligand>
        <name>NAD(+)</name>
        <dbReference type="ChEBI" id="CHEBI:57540"/>
    </ligand>
</feature>
<feature type="binding site" evidence="1">
    <location>
        <position position="380"/>
    </location>
    <ligand>
        <name>FAD</name>
        <dbReference type="ChEBI" id="CHEBI:57692"/>
    </ligand>
</feature>
<name>MNMG_ANAMF</name>
<dbReference type="EMBL" id="CP001079">
    <property type="protein sequence ID" value="ACM49571.1"/>
    <property type="molecule type" value="Genomic_DNA"/>
</dbReference>
<dbReference type="RefSeq" id="WP_012659062.1">
    <property type="nucleotide sequence ID" value="NZ_AFMS01000129.1"/>
</dbReference>
<dbReference type="SMR" id="B9KGL7"/>
<dbReference type="STRING" id="320483.AMF_737"/>
<dbReference type="GeneID" id="7397917"/>
<dbReference type="KEGG" id="amf:AMF_737"/>
<dbReference type="PATRIC" id="fig|320483.3.peg.840"/>
<dbReference type="eggNOG" id="COG0445">
    <property type="taxonomic scope" value="Bacteria"/>
</dbReference>
<dbReference type="HOGENOM" id="CLU_007831_2_2_5"/>
<dbReference type="Proteomes" id="UP000007307">
    <property type="component" value="Chromosome"/>
</dbReference>
<dbReference type="GO" id="GO:0005829">
    <property type="term" value="C:cytosol"/>
    <property type="evidence" value="ECO:0007669"/>
    <property type="project" value="TreeGrafter"/>
</dbReference>
<dbReference type="GO" id="GO:0050660">
    <property type="term" value="F:flavin adenine dinucleotide binding"/>
    <property type="evidence" value="ECO:0007669"/>
    <property type="project" value="UniProtKB-UniRule"/>
</dbReference>
<dbReference type="GO" id="GO:0030488">
    <property type="term" value="P:tRNA methylation"/>
    <property type="evidence" value="ECO:0007669"/>
    <property type="project" value="TreeGrafter"/>
</dbReference>
<dbReference type="GO" id="GO:0002098">
    <property type="term" value="P:tRNA wobble uridine modification"/>
    <property type="evidence" value="ECO:0007669"/>
    <property type="project" value="InterPro"/>
</dbReference>
<dbReference type="FunFam" id="1.10.150.570:FF:000001">
    <property type="entry name" value="tRNA uridine 5-carboxymethylaminomethyl modification enzyme MnmG"/>
    <property type="match status" value="1"/>
</dbReference>
<dbReference type="FunFam" id="3.50.50.60:FF:000002">
    <property type="entry name" value="tRNA uridine 5-carboxymethylaminomethyl modification enzyme MnmG"/>
    <property type="match status" value="1"/>
</dbReference>
<dbReference type="Gene3D" id="3.50.50.60">
    <property type="entry name" value="FAD/NAD(P)-binding domain"/>
    <property type="match status" value="2"/>
</dbReference>
<dbReference type="Gene3D" id="1.10.150.570">
    <property type="entry name" value="GidA associated domain, C-terminal subdomain"/>
    <property type="match status" value="1"/>
</dbReference>
<dbReference type="Gene3D" id="1.10.10.1800">
    <property type="entry name" value="tRNA uridine 5-carboxymethylaminomethyl modification enzyme MnmG/GidA"/>
    <property type="match status" value="1"/>
</dbReference>
<dbReference type="HAMAP" id="MF_00129">
    <property type="entry name" value="MnmG_GidA"/>
    <property type="match status" value="1"/>
</dbReference>
<dbReference type="InterPro" id="IPR036188">
    <property type="entry name" value="FAD/NAD-bd_sf"/>
</dbReference>
<dbReference type="InterPro" id="IPR049312">
    <property type="entry name" value="GIDA_C_N"/>
</dbReference>
<dbReference type="InterPro" id="IPR004416">
    <property type="entry name" value="MnmG"/>
</dbReference>
<dbReference type="InterPro" id="IPR002218">
    <property type="entry name" value="MnmG-rel"/>
</dbReference>
<dbReference type="InterPro" id="IPR020595">
    <property type="entry name" value="MnmG-rel_CS"/>
</dbReference>
<dbReference type="InterPro" id="IPR026904">
    <property type="entry name" value="MnmG_C"/>
</dbReference>
<dbReference type="InterPro" id="IPR047001">
    <property type="entry name" value="MnmG_C_subdom"/>
</dbReference>
<dbReference type="InterPro" id="IPR044920">
    <property type="entry name" value="MnmG_C_subdom_sf"/>
</dbReference>
<dbReference type="InterPro" id="IPR040131">
    <property type="entry name" value="MnmG_N"/>
</dbReference>
<dbReference type="NCBIfam" id="TIGR00136">
    <property type="entry name" value="mnmG_gidA"/>
    <property type="match status" value="1"/>
</dbReference>
<dbReference type="PANTHER" id="PTHR11806">
    <property type="entry name" value="GLUCOSE INHIBITED DIVISION PROTEIN A"/>
    <property type="match status" value="1"/>
</dbReference>
<dbReference type="PANTHER" id="PTHR11806:SF0">
    <property type="entry name" value="PROTEIN MTO1 HOMOLOG, MITOCHONDRIAL"/>
    <property type="match status" value="1"/>
</dbReference>
<dbReference type="Pfam" id="PF01134">
    <property type="entry name" value="GIDA"/>
    <property type="match status" value="1"/>
</dbReference>
<dbReference type="Pfam" id="PF21680">
    <property type="entry name" value="GIDA_C_1st"/>
    <property type="match status" value="1"/>
</dbReference>
<dbReference type="Pfam" id="PF13932">
    <property type="entry name" value="SAM_GIDA_C"/>
    <property type="match status" value="1"/>
</dbReference>
<dbReference type="PRINTS" id="PR00411">
    <property type="entry name" value="PNDRDTASEI"/>
</dbReference>
<dbReference type="SMART" id="SM01228">
    <property type="entry name" value="GIDA_assoc_3"/>
    <property type="match status" value="1"/>
</dbReference>
<dbReference type="SUPFAM" id="SSF51905">
    <property type="entry name" value="FAD/NAD(P)-binding domain"/>
    <property type="match status" value="1"/>
</dbReference>
<dbReference type="PROSITE" id="PS01280">
    <property type="entry name" value="GIDA_1"/>
    <property type="match status" value="1"/>
</dbReference>
<dbReference type="PROSITE" id="PS01281">
    <property type="entry name" value="GIDA_2"/>
    <property type="match status" value="1"/>
</dbReference>
<accession>B9KGL7</accession>
<sequence length="637" mass="69396">MFYIIWLVVVLSYEVVVVGGGHAGCEAAAAAARVGAKTLLITHKIGSIGEMSCNPAIGGVAKGVVVREVDALDGLMGQAIDKASIHSTILNQSKGPAVWGPRAQADRDAYRTAMQDIVLGYKNLEVLEASVIDFSTDNEAGSPCVASVTLSCGKVLHTRRLVLATGTFLGGMIHVGRDKGIPAGRMGDKPSTRLAKALCAHGFMLGRLKTGTPPRIDRSSIDWSATAEQKGDLVPTPFSFLSDAIVLPQVSCYITHTNTKTHEIVRNNLHLAASCASLVDVAAPRYCPSIEEKVRRFPEHKSHQVFLEPEGLDSNSVYPNGVSTSCPIDVQLEMLRSIRGLENVRMLRHGYTVEYNFVDPRELHHTLETKKIKGLYFAGQINGTTGYEEAAGQGIVAGANAALSLSQNHAPFVLKRSEAYIGVMIDDLVTLGTSEPYRLFTSRAEYRLRLRSDNADMRLTEMGYNAGLVSERRFGVLYNKKQEMDRLVEELHRTSITPHTLSKCGIFISQNGEKKTAFELLGHPSITMDILIQLWPSLNSFSRAALAAVGIEGKYAPYLQRQAADIQSFLEEENASIPADIRYSEVHGLSKEAQEKLQRAQPFSIGAARRIPGITPAAIANIIIHLRCRGRASHQNS</sequence>
<keyword id="KW-0963">Cytoplasm</keyword>
<keyword id="KW-0274">FAD</keyword>
<keyword id="KW-0285">Flavoprotein</keyword>
<keyword id="KW-0520">NAD</keyword>
<keyword id="KW-1185">Reference proteome</keyword>
<keyword id="KW-0819">tRNA processing</keyword>
<proteinExistence type="inferred from homology"/>
<comment type="function">
    <text evidence="1">NAD-binding protein involved in the addition of a carboxymethylaminomethyl (cmnm) group at the wobble position (U34) of certain tRNAs, forming tRNA-cmnm(5)s(2)U34.</text>
</comment>
<comment type="cofactor">
    <cofactor evidence="1">
        <name>FAD</name>
        <dbReference type="ChEBI" id="CHEBI:57692"/>
    </cofactor>
</comment>
<comment type="subunit">
    <text evidence="1">Homodimer. Heterotetramer of two MnmE and two MnmG subunits.</text>
</comment>
<comment type="subcellular location">
    <subcellularLocation>
        <location evidence="1">Cytoplasm</location>
    </subcellularLocation>
</comment>
<comment type="similarity">
    <text evidence="1">Belongs to the MnmG family.</text>
</comment>